<dbReference type="PDB" id="3HIP">
    <property type="method" value="X-ray"/>
    <property type="resolution" value="2.80 A"/>
    <property type="chains" value="A/B/C=1-82"/>
</dbReference>
<dbReference type="PDBsum" id="3HIP"/>
<dbReference type="SMR" id="P59860"/>
<dbReference type="EvolutionaryTrace" id="P59860"/>
<dbReference type="GO" id="GO:0042597">
    <property type="term" value="C:periplasmic space"/>
    <property type="evidence" value="ECO:0007669"/>
    <property type="project" value="UniProtKB-SubCell"/>
</dbReference>
<dbReference type="GO" id="GO:0051539">
    <property type="term" value="F:4 iron, 4 sulfur cluster binding"/>
    <property type="evidence" value="ECO:0007669"/>
    <property type="project" value="UniProtKB-KW"/>
</dbReference>
<dbReference type="GO" id="GO:0009055">
    <property type="term" value="F:electron transfer activity"/>
    <property type="evidence" value="ECO:0007669"/>
    <property type="project" value="InterPro"/>
</dbReference>
<dbReference type="GO" id="GO:0046872">
    <property type="term" value="F:metal ion binding"/>
    <property type="evidence" value="ECO:0007669"/>
    <property type="project" value="UniProtKB-KW"/>
</dbReference>
<dbReference type="GO" id="GO:0019646">
    <property type="term" value="P:aerobic electron transport chain"/>
    <property type="evidence" value="ECO:0007669"/>
    <property type="project" value="InterPro"/>
</dbReference>
<dbReference type="Gene3D" id="4.10.490.10">
    <property type="entry name" value="High potential iron-sulphur protein"/>
    <property type="match status" value="1"/>
</dbReference>
<dbReference type="InterPro" id="IPR000170">
    <property type="entry name" value="High_potential_FeS_prot"/>
</dbReference>
<dbReference type="InterPro" id="IPR036369">
    <property type="entry name" value="HIPIP_sf"/>
</dbReference>
<dbReference type="Pfam" id="PF01355">
    <property type="entry name" value="HIPIP"/>
    <property type="match status" value="1"/>
</dbReference>
<dbReference type="SUPFAM" id="SSF57652">
    <property type="entry name" value="HIPIP (high potential iron protein)"/>
    <property type="match status" value="1"/>
</dbReference>
<dbReference type="PROSITE" id="PS51373">
    <property type="entry name" value="HIPIP"/>
    <property type="match status" value="1"/>
</dbReference>
<evidence type="ECO:0000255" key="1">
    <source>
        <dbReference type="PROSITE-ProRule" id="PRU00705"/>
    </source>
</evidence>
<evidence type="ECO:0000269" key="2">
    <source>
    </source>
</evidence>
<evidence type="ECO:0000305" key="3"/>
<evidence type="ECO:0007829" key="4">
    <source>
        <dbReference type="PDB" id="3HIP"/>
    </source>
</evidence>
<accession>P59860</accession>
<protein>
    <recommendedName>
        <fullName>High-potential iron-sulfur protein</fullName>
        <shortName>HiPIP</shortName>
    </recommendedName>
</protein>
<comment type="function">
    <text>Specific class of high-redox-potential 4Fe-4S ferredoxins. Functions in anaerobic electron transport in most purple and in some other photosynthetic bacteria and in at least one genus (Paracoccus) of halophilic, denitrifying bacteria.</text>
</comment>
<comment type="subunit">
    <text evidence="3">Homodimer.</text>
</comment>
<comment type="subcellular location">
    <subcellularLocation>
        <location>Periplasm</location>
    </subcellularLocation>
</comment>
<comment type="similarity">
    <text evidence="1">Belongs to the high-potential iron-sulfur protein (HiPIP) family.</text>
</comment>
<reference key="1">
    <citation type="journal article" date="1996" name="Biochemistry">
        <title>Isolation and characterization of soluble electron transfer proteins from Chromatium purpuratum.</title>
        <authorList>
            <person name="Kerfeld C.A."/>
            <person name="Chan C."/>
            <person name="Hirasawa M."/>
            <person name="Kleis-SanFrancisco S."/>
            <person name="Yeates T.O."/>
            <person name="Knaff D.B."/>
        </authorList>
    </citation>
    <scope>PROTEIN SEQUENCE OF 1-25</scope>
    <scope>CHARACTERIZATION</scope>
</reference>
<reference key="2">
    <citation type="journal article" date="1998" name="Biochemistry">
        <title>Crystal structure and possible dimerization of the high-potential iron-sulfur protein from Chromatium purpuratum.</title>
        <authorList>
            <person name="Kerfeld C.A."/>
            <person name="Salmeen A.E."/>
            <person name="Yeates T.O."/>
        </authorList>
    </citation>
    <scope>X-RAY CRYSTALLOGRAPHY (2.7 ANGSTROMS) IN COMPLEX WITH IRON-SULFUR (4FE-4S)</scope>
</reference>
<feature type="chain" id="PRO_0000220422" description="High-potential iron-sulfur protein">
    <location>
        <begin position="1"/>
        <end position="82"/>
    </location>
</feature>
<feature type="binding site" evidence="2">
    <location>
        <position position="42"/>
    </location>
    <ligand>
        <name>[4Fe-4S] cluster</name>
        <dbReference type="ChEBI" id="CHEBI:49883"/>
    </ligand>
</feature>
<feature type="binding site" evidence="2">
    <location>
        <position position="45"/>
    </location>
    <ligand>
        <name>[4Fe-4S] cluster</name>
        <dbReference type="ChEBI" id="CHEBI:49883"/>
    </ligand>
</feature>
<feature type="binding site" evidence="2">
    <location>
        <position position="60"/>
    </location>
    <ligand>
        <name>[4Fe-4S] cluster</name>
        <dbReference type="ChEBI" id="CHEBI:49883"/>
    </ligand>
</feature>
<feature type="binding site" evidence="2">
    <location>
        <position position="74"/>
    </location>
    <ligand>
        <name>[4Fe-4S] cluster</name>
        <dbReference type="ChEBI" id="CHEBI:49883"/>
    </ligand>
</feature>
<feature type="helix" evidence="4">
    <location>
        <begin position="11"/>
        <end position="16"/>
    </location>
</feature>
<feature type="strand" evidence="4">
    <location>
        <begin position="19"/>
        <end position="21"/>
    </location>
</feature>
<feature type="helix" evidence="4">
    <location>
        <begin position="22"/>
        <end position="24"/>
    </location>
</feature>
<feature type="helix" evidence="4">
    <location>
        <begin position="27"/>
        <end position="30"/>
    </location>
</feature>
<feature type="strand" evidence="4">
    <location>
        <begin position="33"/>
        <end position="35"/>
    </location>
</feature>
<feature type="helix" evidence="4">
    <location>
        <begin position="37"/>
        <end position="39"/>
    </location>
</feature>
<feature type="helix" evidence="4">
    <location>
        <begin position="42"/>
        <end position="44"/>
    </location>
</feature>
<feature type="strand" evidence="4">
    <location>
        <begin position="48"/>
        <end position="54"/>
    </location>
</feature>
<feature type="strand" evidence="4">
    <location>
        <begin position="57"/>
        <end position="60"/>
    </location>
</feature>
<feature type="strand" evidence="4">
    <location>
        <begin position="67"/>
        <end position="69"/>
    </location>
</feature>
<gene>
    <name type="primary">hip</name>
</gene>
<organism>
    <name type="scientific">Marichromatium purpuratum</name>
    <name type="common">Chromatium purpuratum</name>
    <dbReference type="NCBI Taxonomy" id="37487"/>
    <lineage>
        <taxon>Bacteria</taxon>
        <taxon>Pseudomonadati</taxon>
        <taxon>Pseudomonadota</taxon>
        <taxon>Gammaproteobacteria</taxon>
        <taxon>Chromatiales</taxon>
        <taxon>Chromatiaceae</taxon>
        <taxon>Marichromatium</taxon>
    </lineage>
</organism>
<keyword id="KW-0002">3D-structure</keyword>
<keyword id="KW-0004">4Fe-4S</keyword>
<keyword id="KW-0903">Direct protein sequencing</keyword>
<keyword id="KW-0249">Electron transport</keyword>
<keyword id="KW-0408">Iron</keyword>
<keyword id="KW-0411">Iron-sulfur</keyword>
<keyword id="KW-0479">Metal-binding</keyword>
<keyword id="KW-0574">Periplasm</keyword>
<keyword id="KW-0813">Transport</keyword>
<name>HIP_MARPU</name>
<sequence length="82" mass="8753">VPANAVTESDPAAVALKYHRDAASSERVAAARPGLPPEEQHCENCQFMNPDSAAADWKGCQLFPGKLINLSGWCASWTLRAG</sequence>
<proteinExistence type="evidence at protein level"/>